<comment type="function">
    <text>May be involved in the functional assembly of glucose 6-phosphate dehydrogenase.</text>
</comment>
<proteinExistence type="predicted"/>
<name>OPCA_NOSP7</name>
<gene>
    <name type="primary">opcA</name>
    <name type="ordered locus">Npun_F4026</name>
</gene>
<feature type="chain" id="PRO_0000058057" description="Putative OxPP cycle protein OpcA">
    <location>
        <begin position="1"/>
        <end position="465"/>
    </location>
</feature>
<keyword id="KW-1185">Reference proteome</keyword>
<organism>
    <name type="scientific">Nostoc punctiforme (strain ATCC 29133 / PCC 73102)</name>
    <dbReference type="NCBI Taxonomy" id="63737"/>
    <lineage>
        <taxon>Bacteria</taxon>
        <taxon>Bacillati</taxon>
        <taxon>Cyanobacteriota</taxon>
        <taxon>Cyanophyceae</taxon>
        <taxon>Nostocales</taxon>
        <taxon>Nostocaceae</taxon>
        <taxon>Nostoc</taxon>
    </lineage>
</organism>
<reference key="1">
    <citation type="journal article" date="1995" name="Plant Physiol.">
        <title>Nucleotide sequence of an operon in Nostoc sp. strain ATCC 29133 encoding four genes of the oxidative pentose phosphate cycle.</title>
        <authorList>
            <person name="Summers M.L."/>
            <person name="Meeks J.C."/>
            <person name="Chu S."/>
            <person name="Wolf R.E. Jr."/>
        </authorList>
    </citation>
    <scope>NUCLEOTIDE SEQUENCE [GENOMIC DNA]</scope>
</reference>
<reference key="2">
    <citation type="journal article" date="2013" name="Plant Physiol.">
        <title>A Nostoc punctiforme Sugar Transporter Necessary to Establish a Cyanobacterium-Plant Symbiosis.</title>
        <authorList>
            <person name="Ekman M."/>
            <person name="Picossi S."/>
            <person name="Campbell E.L."/>
            <person name="Meeks J.C."/>
            <person name="Flores E."/>
        </authorList>
    </citation>
    <scope>NUCLEOTIDE SEQUENCE [LARGE SCALE GENOMIC DNA]</scope>
    <source>
        <strain>ATCC 29133 / PCC 73102</strain>
    </source>
</reference>
<dbReference type="EMBL" id="L32796">
    <property type="protein sequence ID" value="AAA50771.1"/>
    <property type="molecule type" value="Genomic_DNA"/>
</dbReference>
<dbReference type="EMBL" id="CP001037">
    <property type="protein sequence ID" value="ACC82405.1"/>
    <property type="molecule type" value="Genomic_DNA"/>
</dbReference>
<dbReference type="SMR" id="P48971"/>
<dbReference type="STRING" id="63737.Npun_F4026"/>
<dbReference type="EnsemblBacteria" id="ACC82405">
    <property type="protein sequence ID" value="ACC82405"/>
    <property type="gene ID" value="Npun_F4026"/>
</dbReference>
<dbReference type="KEGG" id="npu:Npun_F4026"/>
<dbReference type="eggNOG" id="COG3409">
    <property type="taxonomic scope" value="Bacteria"/>
</dbReference>
<dbReference type="eggNOG" id="COG3429">
    <property type="taxonomic scope" value="Bacteria"/>
</dbReference>
<dbReference type="HOGENOM" id="CLU_048410_0_0_3"/>
<dbReference type="PhylomeDB" id="P48971"/>
<dbReference type="Proteomes" id="UP000001191">
    <property type="component" value="Chromosome"/>
</dbReference>
<dbReference type="Gene3D" id="1.10.101.10">
    <property type="entry name" value="PGBD-like superfamily/PGBD"/>
    <property type="match status" value="1"/>
</dbReference>
<dbReference type="InterPro" id="IPR004555">
    <property type="entry name" value="G6PDH_assembly_OpcA"/>
</dbReference>
<dbReference type="InterPro" id="IPR046802">
    <property type="entry name" value="OpcA_G6PD_C"/>
</dbReference>
<dbReference type="InterPro" id="IPR046801">
    <property type="entry name" value="OpcA_G6PD_N"/>
</dbReference>
<dbReference type="InterPro" id="IPR002477">
    <property type="entry name" value="Peptidoglycan-bd-like"/>
</dbReference>
<dbReference type="InterPro" id="IPR036365">
    <property type="entry name" value="PGBD-like_sf"/>
</dbReference>
<dbReference type="InterPro" id="IPR036366">
    <property type="entry name" value="PGBDSf"/>
</dbReference>
<dbReference type="NCBIfam" id="TIGR00534">
    <property type="entry name" value="OpcA"/>
    <property type="match status" value="1"/>
</dbReference>
<dbReference type="PANTHER" id="PTHR38658">
    <property type="entry name" value="OXPP CYCLE PROTEIN OPCA-RELATED"/>
    <property type="match status" value="1"/>
</dbReference>
<dbReference type="PANTHER" id="PTHR38658:SF1">
    <property type="entry name" value="OXPP CYCLE PROTEIN OPCA-RELATED"/>
    <property type="match status" value="1"/>
</dbReference>
<dbReference type="Pfam" id="PF10128">
    <property type="entry name" value="OpcA_G6PD_assem"/>
    <property type="match status" value="1"/>
</dbReference>
<dbReference type="Pfam" id="PF20171">
    <property type="entry name" value="OpcA_G6PD_C"/>
    <property type="match status" value="1"/>
</dbReference>
<dbReference type="Pfam" id="PF01471">
    <property type="entry name" value="PG_binding_1"/>
    <property type="match status" value="1"/>
</dbReference>
<dbReference type="SUPFAM" id="SSF47090">
    <property type="entry name" value="PGBD-like"/>
    <property type="match status" value="1"/>
</dbReference>
<protein>
    <recommendedName>
        <fullName>Putative OxPP cycle protein OpcA</fullName>
    </recommendedName>
</protein>
<sequence length="465" mass="50627">MTKSKISNPKLPMALQTSTIFSLQAPKDISLNEIDAELNQIWQSYGITGEDGGLPSATRATTFTLVVYEPEETQYLLAALGFYNGPIDGILGPQMAAALREVQKKHKLPETGTATQETLTILREEFAKGQRGGTGGEHAIAGLNSGSPRIADEIALRNPCRIIALFPITGEDEGVKAQVSAYCPIQKQSSSTLICCEYITLSGTAAALERIGGMIPALLIGGLPKFLWWKATPDPNNGLFKRLAAICNNVIVDSCNFNEPESDLLRLEELVEAGVPLADLNWRRLASWQELTAEAYDSPKRRAALREIDRVTIDYEKGNPAQALLFLGWLASRLEWQPVSYQKESGDYDITRIHFISQDQRQVEAELAGVPVADVGDIIGDLIALRLSSTNPQADCGTVICSETGGCMRMETHGGAQSAGLFQQVTSLSEQKAEALLSQQVQRWGRESLFEESLGVTANIFKLAN</sequence>
<accession>P48971</accession>
<accession>B2J6K0</accession>